<evidence type="ECO:0000255" key="1">
    <source>
        <dbReference type="HAMAP-Rule" id="MF_00176"/>
    </source>
</evidence>
<keyword id="KW-0030">Aminoacyl-tRNA synthetase</keyword>
<keyword id="KW-0067">ATP-binding</keyword>
<keyword id="KW-0963">Cytoplasm</keyword>
<keyword id="KW-0436">Ligase</keyword>
<keyword id="KW-0547">Nucleotide-binding</keyword>
<keyword id="KW-0648">Protein biosynthesis</keyword>
<keyword id="KW-1185">Reference proteome</keyword>
<accession>O83653</accession>
<name>SYS_TREPA</name>
<dbReference type="EC" id="6.1.1.11" evidence="1"/>
<dbReference type="EMBL" id="AE000520">
    <property type="protein sequence ID" value="AAC65620.1"/>
    <property type="molecule type" value="Genomic_DNA"/>
</dbReference>
<dbReference type="PIR" id="F71299">
    <property type="entry name" value="F71299"/>
</dbReference>
<dbReference type="RefSeq" id="WP_010882092.1">
    <property type="nucleotide sequence ID" value="NC_021490.2"/>
</dbReference>
<dbReference type="SMR" id="O83653"/>
<dbReference type="IntAct" id="O83653">
    <property type="interactions" value="2"/>
</dbReference>
<dbReference type="STRING" id="243276.TP_0647"/>
<dbReference type="EnsemblBacteria" id="AAC65620">
    <property type="protein sequence ID" value="AAC65620"/>
    <property type="gene ID" value="TP_0647"/>
</dbReference>
<dbReference type="GeneID" id="93876415"/>
<dbReference type="KEGG" id="tpa:TP_0647"/>
<dbReference type="KEGG" id="tpw:TPANIC_0647"/>
<dbReference type="eggNOG" id="COG0172">
    <property type="taxonomic scope" value="Bacteria"/>
</dbReference>
<dbReference type="HOGENOM" id="CLU_023797_0_1_12"/>
<dbReference type="OrthoDB" id="9804647at2"/>
<dbReference type="UniPathway" id="UPA00906">
    <property type="reaction ID" value="UER00895"/>
</dbReference>
<dbReference type="Proteomes" id="UP000000811">
    <property type="component" value="Chromosome"/>
</dbReference>
<dbReference type="GO" id="GO:0005737">
    <property type="term" value="C:cytoplasm"/>
    <property type="evidence" value="ECO:0007669"/>
    <property type="project" value="UniProtKB-SubCell"/>
</dbReference>
<dbReference type="GO" id="GO:0005524">
    <property type="term" value="F:ATP binding"/>
    <property type="evidence" value="ECO:0007669"/>
    <property type="project" value="UniProtKB-UniRule"/>
</dbReference>
<dbReference type="GO" id="GO:0004828">
    <property type="term" value="F:serine-tRNA ligase activity"/>
    <property type="evidence" value="ECO:0007669"/>
    <property type="project" value="UniProtKB-UniRule"/>
</dbReference>
<dbReference type="GO" id="GO:0016260">
    <property type="term" value="P:selenocysteine biosynthetic process"/>
    <property type="evidence" value="ECO:0007669"/>
    <property type="project" value="UniProtKB-UniRule"/>
</dbReference>
<dbReference type="GO" id="GO:0006434">
    <property type="term" value="P:seryl-tRNA aminoacylation"/>
    <property type="evidence" value="ECO:0007669"/>
    <property type="project" value="UniProtKB-UniRule"/>
</dbReference>
<dbReference type="CDD" id="cd00770">
    <property type="entry name" value="SerRS_core"/>
    <property type="match status" value="1"/>
</dbReference>
<dbReference type="Gene3D" id="3.30.930.10">
    <property type="entry name" value="Bira Bifunctional Protein, Domain 2"/>
    <property type="match status" value="1"/>
</dbReference>
<dbReference type="Gene3D" id="1.10.287.40">
    <property type="entry name" value="Serine-tRNA synthetase, tRNA binding domain"/>
    <property type="match status" value="1"/>
</dbReference>
<dbReference type="HAMAP" id="MF_00176">
    <property type="entry name" value="Ser_tRNA_synth_type1"/>
    <property type="match status" value="1"/>
</dbReference>
<dbReference type="InterPro" id="IPR002314">
    <property type="entry name" value="aa-tRNA-synt_IIb"/>
</dbReference>
<dbReference type="InterPro" id="IPR006195">
    <property type="entry name" value="aa-tRNA-synth_II"/>
</dbReference>
<dbReference type="InterPro" id="IPR045864">
    <property type="entry name" value="aa-tRNA-synth_II/BPL/LPL"/>
</dbReference>
<dbReference type="InterPro" id="IPR002317">
    <property type="entry name" value="Ser-tRNA-ligase_type_1"/>
</dbReference>
<dbReference type="InterPro" id="IPR015866">
    <property type="entry name" value="Ser-tRNA-synth_1_N"/>
</dbReference>
<dbReference type="InterPro" id="IPR042103">
    <property type="entry name" value="SerRS_1_N_sf"/>
</dbReference>
<dbReference type="InterPro" id="IPR033729">
    <property type="entry name" value="SerRS_core"/>
</dbReference>
<dbReference type="InterPro" id="IPR010978">
    <property type="entry name" value="tRNA-bd_arm"/>
</dbReference>
<dbReference type="NCBIfam" id="TIGR00414">
    <property type="entry name" value="serS"/>
    <property type="match status" value="1"/>
</dbReference>
<dbReference type="PANTHER" id="PTHR11778">
    <property type="entry name" value="SERYL-TRNA SYNTHETASE"/>
    <property type="match status" value="1"/>
</dbReference>
<dbReference type="Pfam" id="PF02403">
    <property type="entry name" value="Seryl_tRNA_N"/>
    <property type="match status" value="1"/>
</dbReference>
<dbReference type="Pfam" id="PF00587">
    <property type="entry name" value="tRNA-synt_2b"/>
    <property type="match status" value="1"/>
</dbReference>
<dbReference type="PIRSF" id="PIRSF001529">
    <property type="entry name" value="Ser-tRNA-synth_IIa"/>
    <property type="match status" value="1"/>
</dbReference>
<dbReference type="PRINTS" id="PR00981">
    <property type="entry name" value="TRNASYNTHSER"/>
</dbReference>
<dbReference type="SUPFAM" id="SSF55681">
    <property type="entry name" value="Class II aaRS and biotin synthetases"/>
    <property type="match status" value="1"/>
</dbReference>
<dbReference type="SUPFAM" id="SSF46589">
    <property type="entry name" value="tRNA-binding arm"/>
    <property type="match status" value="1"/>
</dbReference>
<dbReference type="PROSITE" id="PS50862">
    <property type="entry name" value="AA_TRNA_LIGASE_II"/>
    <property type="match status" value="1"/>
</dbReference>
<protein>
    <recommendedName>
        <fullName evidence="1">Serine--tRNA ligase</fullName>
        <ecNumber evidence="1">6.1.1.11</ecNumber>
    </recommendedName>
    <alternativeName>
        <fullName evidence="1">Seryl-tRNA synthetase</fullName>
        <shortName evidence="1">SerRS</shortName>
    </alternativeName>
    <alternativeName>
        <fullName evidence="1">Seryl-tRNA(Ser/Sec) synthetase</fullName>
    </alternativeName>
</protein>
<comment type="function">
    <text evidence="1">Catalyzes the attachment of serine to tRNA(Ser). Is also able to aminoacylate tRNA(Sec) with serine, to form the misacylated tRNA L-seryl-tRNA(Sec), which will be further converted into selenocysteinyl-tRNA(Sec).</text>
</comment>
<comment type="catalytic activity">
    <reaction evidence="1">
        <text>tRNA(Ser) + L-serine + ATP = L-seryl-tRNA(Ser) + AMP + diphosphate + H(+)</text>
        <dbReference type="Rhea" id="RHEA:12292"/>
        <dbReference type="Rhea" id="RHEA-COMP:9669"/>
        <dbReference type="Rhea" id="RHEA-COMP:9703"/>
        <dbReference type="ChEBI" id="CHEBI:15378"/>
        <dbReference type="ChEBI" id="CHEBI:30616"/>
        <dbReference type="ChEBI" id="CHEBI:33019"/>
        <dbReference type="ChEBI" id="CHEBI:33384"/>
        <dbReference type="ChEBI" id="CHEBI:78442"/>
        <dbReference type="ChEBI" id="CHEBI:78533"/>
        <dbReference type="ChEBI" id="CHEBI:456215"/>
        <dbReference type="EC" id="6.1.1.11"/>
    </reaction>
</comment>
<comment type="catalytic activity">
    <reaction evidence="1">
        <text>tRNA(Sec) + L-serine + ATP = L-seryl-tRNA(Sec) + AMP + diphosphate + H(+)</text>
        <dbReference type="Rhea" id="RHEA:42580"/>
        <dbReference type="Rhea" id="RHEA-COMP:9742"/>
        <dbReference type="Rhea" id="RHEA-COMP:10128"/>
        <dbReference type="ChEBI" id="CHEBI:15378"/>
        <dbReference type="ChEBI" id="CHEBI:30616"/>
        <dbReference type="ChEBI" id="CHEBI:33019"/>
        <dbReference type="ChEBI" id="CHEBI:33384"/>
        <dbReference type="ChEBI" id="CHEBI:78442"/>
        <dbReference type="ChEBI" id="CHEBI:78533"/>
        <dbReference type="ChEBI" id="CHEBI:456215"/>
        <dbReference type="EC" id="6.1.1.11"/>
    </reaction>
</comment>
<comment type="pathway">
    <text evidence="1">Aminoacyl-tRNA biosynthesis; selenocysteinyl-tRNA(Sec) biosynthesis; L-seryl-tRNA(Sec) from L-serine and tRNA(Sec): step 1/1.</text>
</comment>
<comment type="subunit">
    <text evidence="1">Homodimer. The tRNA molecule binds across the dimer.</text>
</comment>
<comment type="subcellular location">
    <subcellularLocation>
        <location evidence="1">Cytoplasm</location>
    </subcellularLocation>
</comment>
<comment type="domain">
    <text evidence="1">Consists of two distinct domains, a catalytic core and a N-terminal extension that is involved in tRNA binding.</text>
</comment>
<comment type="similarity">
    <text evidence="1">Belongs to the class-II aminoacyl-tRNA synthetase family. Type-1 seryl-tRNA synthetase subfamily.</text>
</comment>
<gene>
    <name evidence="1" type="primary">serS</name>
    <name type="ordered locus">TP_0647</name>
</gene>
<proteinExistence type="inferred from homology"/>
<reference key="1">
    <citation type="journal article" date="1998" name="Science">
        <title>Complete genome sequence of Treponema pallidum, the syphilis spirochete.</title>
        <authorList>
            <person name="Fraser C.M."/>
            <person name="Norris S.J."/>
            <person name="Weinstock G.M."/>
            <person name="White O."/>
            <person name="Sutton G.G."/>
            <person name="Dodson R.J."/>
            <person name="Gwinn M.L."/>
            <person name="Hickey E.K."/>
            <person name="Clayton R.A."/>
            <person name="Ketchum K.A."/>
            <person name="Sodergren E."/>
            <person name="Hardham J.M."/>
            <person name="McLeod M.P."/>
            <person name="Salzberg S.L."/>
            <person name="Peterson J.D."/>
            <person name="Khalak H.G."/>
            <person name="Richardson D.L."/>
            <person name="Howell J.K."/>
            <person name="Chidambaram M."/>
            <person name="Utterback T.R."/>
            <person name="McDonald L.A."/>
            <person name="Artiach P."/>
            <person name="Bowman C."/>
            <person name="Cotton M.D."/>
            <person name="Fujii C."/>
            <person name="Garland S.A."/>
            <person name="Hatch B."/>
            <person name="Horst K."/>
            <person name="Roberts K.M."/>
            <person name="Sandusky M."/>
            <person name="Weidman J.F."/>
            <person name="Smith H.O."/>
            <person name="Venter J.C."/>
        </authorList>
    </citation>
    <scope>NUCLEOTIDE SEQUENCE [LARGE SCALE GENOMIC DNA]</scope>
    <source>
        <strain>Nichols</strain>
    </source>
</reference>
<organism>
    <name type="scientific">Treponema pallidum (strain Nichols)</name>
    <dbReference type="NCBI Taxonomy" id="243276"/>
    <lineage>
        <taxon>Bacteria</taxon>
        <taxon>Pseudomonadati</taxon>
        <taxon>Spirochaetota</taxon>
        <taxon>Spirochaetia</taxon>
        <taxon>Spirochaetales</taxon>
        <taxon>Treponemataceae</taxon>
        <taxon>Treponema</taxon>
    </lineage>
</organism>
<feature type="chain" id="PRO_0000122149" description="Serine--tRNA ligase">
    <location>
        <begin position="1"/>
        <end position="426"/>
    </location>
</feature>
<feature type="binding site" evidence="1">
    <location>
        <begin position="229"/>
        <end position="231"/>
    </location>
    <ligand>
        <name>L-serine</name>
        <dbReference type="ChEBI" id="CHEBI:33384"/>
    </ligand>
</feature>
<feature type="binding site" evidence="1">
    <location>
        <begin position="260"/>
        <end position="262"/>
    </location>
    <ligand>
        <name>ATP</name>
        <dbReference type="ChEBI" id="CHEBI:30616"/>
    </ligand>
</feature>
<feature type="binding site" evidence="1">
    <location>
        <position position="276"/>
    </location>
    <ligand>
        <name>ATP</name>
        <dbReference type="ChEBI" id="CHEBI:30616"/>
    </ligand>
</feature>
<feature type="binding site" evidence="1">
    <location>
        <position position="283"/>
    </location>
    <ligand>
        <name>L-serine</name>
        <dbReference type="ChEBI" id="CHEBI:33384"/>
    </ligand>
</feature>
<feature type="binding site" evidence="1">
    <location>
        <begin position="349"/>
        <end position="352"/>
    </location>
    <ligand>
        <name>ATP</name>
        <dbReference type="ChEBI" id="CHEBI:30616"/>
    </ligand>
</feature>
<feature type="binding site" evidence="1">
    <location>
        <position position="384"/>
    </location>
    <ligand>
        <name>L-serine</name>
        <dbReference type="ChEBI" id="CHEBI:33384"/>
    </ligand>
</feature>
<sequence length="426" mass="48014">MLDYRFIRENVDAVKENVKVRNVHADVDAIVHLYDQRVKLLAELQELQRARNENAQTMKSSLDALARSACVETGRALKDRIAHSERLLVQISDQLLSATQALPNMTHMCTPHGRSDSDNLEIKRCGVPPCFSFSPRDHVELARLLDIVDFEAGKKVSGIKFYYLKREGVLLEQALIMFGLQFLQERGFVPFLTPDIAREGMVCGLGFNPRGSGSNIYRIEGEHRCLVATAEITLGAYHAGEVLEERSLPRLYAGLSHCFRKEAGAAGQFSRGLYRVHQFTKLEMFAYCTPSDSECLHERLRSLEEEIFTALEIPFRVVEVCAGDLGAPAYRKWDLEAWMPGRQGGSWGEVTSASNCTDYQARRLNVRYKDAEGKKHYVHMLNGTALAISRVLIALLENGQDAEGRVRIPQALVPFCGFEYLYPRVL</sequence>